<accession>P9WN49</accession>
<accession>L0TCI8</accession>
<accession>O06253</accession>
<accession>O33274</accession>
<accession>P0A588</accession>
<reference key="1">
    <citation type="submission" date="1997-05" db="EMBL/GenBank/DDBJ databases">
        <title>Biochemical and genetic definition of effects of mannosamine on mycobacteria.</title>
        <authorList>
            <person name="Schaeffer M.L."/>
            <person name="Besra G.S."/>
            <person name="Belisle J.T."/>
            <person name="Inamine J.M."/>
        </authorList>
    </citation>
    <scope>NUCLEOTIDE SEQUENCE [GENOMIC DNA]</scope>
    <source>
        <strain>ATCC 25618 / H37Rv</strain>
    </source>
</reference>
<reference key="2">
    <citation type="submission" date="1997-07" db="EMBL/GenBank/DDBJ databases">
        <title>Structure of a recombinant glmS protein from Mycobacterium tuberculosis expressed in E. coli.</title>
        <authorList>
            <person name="Mckendree W.L."/>
            <person name="Schuster S.M."/>
            <person name="Richards N."/>
        </authorList>
    </citation>
    <scope>NUCLEOTIDE SEQUENCE [GENOMIC DNA]</scope>
</reference>
<reference key="3">
    <citation type="journal article" date="1998" name="Nature">
        <title>Deciphering the biology of Mycobacterium tuberculosis from the complete genome sequence.</title>
        <authorList>
            <person name="Cole S.T."/>
            <person name="Brosch R."/>
            <person name="Parkhill J."/>
            <person name="Garnier T."/>
            <person name="Churcher C.M."/>
            <person name="Harris D.E."/>
            <person name="Gordon S.V."/>
            <person name="Eiglmeier K."/>
            <person name="Gas S."/>
            <person name="Barry C.E. III"/>
            <person name="Tekaia F."/>
            <person name="Badcock K."/>
            <person name="Basham D."/>
            <person name="Brown D."/>
            <person name="Chillingworth T."/>
            <person name="Connor R."/>
            <person name="Davies R.M."/>
            <person name="Devlin K."/>
            <person name="Feltwell T."/>
            <person name="Gentles S."/>
            <person name="Hamlin N."/>
            <person name="Holroyd S."/>
            <person name="Hornsby T."/>
            <person name="Jagels K."/>
            <person name="Krogh A."/>
            <person name="McLean J."/>
            <person name="Moule S."/>
            <person name="Murphy L.D."/>
            <person name="Oliver S."/>
            <person name="Osborne J."/>
            <person name="Quail M.A."/>
            <person name="Rajandream M.A."/>
            <person name="Rogers J."/>
            <person name="Rutter S."/>
            <person name="Seeger K."/>
            <person name="Skelton S."/>
            <person name="Squares S."/>
            <person name="Squares R."/>
            <person name="Sulston J.E."/>
            <person name="Taylor K."/>
            <person name="Whitehead S."/>
            <person name="Barrell B.G."/>
        </authorList>
    </citation>
    <scope>NUCLEOTIDE SEQUENCE [LARGE SCALE GENOMIC DNA]</scope>
    <source>
        <strain>ATCC 25618 / H37Rv</strain>
    </source>
</reference>
<reference key="4">
    <citation type="journal article" date="2011" name="Mol. Cell. Proteomics">
        <title>Proteogenomic analysis of Mycobacterium tuberculosis by high resolution mass spectrometry.</title>
        <authorList>
            <person name="Kelkar D.S."/>
            <person name="Kumar D."/>
            <person name="Kumar P."/>
            <person name="Balakrishnan L."/>
            <person name="Muthusamy B."/>
            <person name="Yadav A.K."/>
            <person name="Shrivastava P."/>
            <person name="Marimuthu A."/>
            <person name="Anand S."/>
            <person name="Sundaram H."/>
            <person name="Kingsbury R."/>
            <person name="Harsha H.C."/>
            <person name="Nair B."/>
            <person name="Prasad T.S."/>
            <person name="Chauhan D.S."/>
            <person name="Katoch K."/>
            <person name="Katoch V.M."/>
            <person name="Kumar P."/>
            <person name="Chaerkady R."/>
            <person name="Ramachandran S."/>
            <person name="Dash D."/>
            <person name="Pandey A."/>
        </authorList>
    </citation>
    <scope>IDENTIFICATION BY MASS SPECTROMETRY [LARGE SCALE ANALYSIS]</scope>
    <source>
        <strain>ATCC 25618 / H37Rv</strain>
    </source>
</reference>
<name>GLMS_MYCTU</name>
<protein>
    <recommendedName>
        <fullName evidence="1">Glutamine--fructose-6-phosphate aminotransferase [isomerizing]</fullName>
        <ecNumber evidence="1">2.6.1.16</ecNumber>
    </recommendedName>
    <alternativeName>
        <fullName evidence="1">D-fructose-6-phosphate amidotransferase</fullName>
    </alternativeName>
    <alternativeName>
        <fullName evidence="1">GFAT</fullName>
    </alternativeName>
    <alternativeName>
        <fullName evidence="1">Glucosamine-6-phosphate synthase</fullName>
    </alternativeName>
    <alternativeName>
        <fullName evidence="1">Hexosephosphate aminotransferase</fullName>
    </alternativeName>
    <alternativeName>
        <fullName evidence="1">L-glutamine--D-fructose-6-phosphate amidotransferase</fullName>
    </alternativeName>
</protein>
<proteinExistence type="evidence at protein level"/>
<sequence length="624" mass="67572">MCGIVGYVGRRPAYVVVMDALRRMEYRGYDSSGIALVDGGTLTVRRRAGRLANLEEAVAEMPSTALSGTTGLGHTRWATHGRPTDRNAHPHRDAAGKIAVVHNGIIENFAVLRRELETAGVEFASDTDTEVAAHLVARAYRHGETADDFVGSVLAVLRRLEGHFTLVFANADDPGTLVAARRSTPLVLGIGDNEMFVGSDVAAFIEHTREAVELGQDQAVVITADGYRISDFDGNDGLQAGRDFRPFHIDWDLAAAEKGGYEYFMLKEIAEQPAAVADTLLGHFVGGRIVLDEQRLSDQELREIDKVFVVACGTAYHSGLLAKYAIEHWTRLPVEVELASEFRYRDPVLDRSTLVVAISQSGETADTLEAVRHAKEQKAKVLAICNTNGSQIPRECDAVLYTRAGPEIGVASTKTFLAQIAANYLLGLALAQARGTKYPDEVEREYHELEAMPDLVARVIAATGPVAELAHRFAQSSTVLFLGRHVGYPVALEGALKLKELAYMHAEGFAAGELKHGPIALIEDGLPVIVVMPSPKGSATLHAKLLSNIREIQTRGAVTIVIAEEGDETVRPYADHLIEIPAVSTLLQPLLSTIPLQVFAASVARARGYDVDKPRNLAKSVTVE</sequence>
<dbReference type="EC" id="2.6.1.16" evidence="1"/>
<dbReference type="EMBL" id="AF002814">
    <property type="protein sequence ID" value="AAB69988.1"/>
    <property type="molecule type" value="Genomic_DNA"/>
</dbReference>
<dbReference type="EMBL" id="AJ000333">
    <property type="protein sequence ID" value="CAA04007.1"/>
    <property type="status" value="ALT_INIT"/>
    <property type="molecule type" value="Genomic_DNA"/>
</dbReference>
<dbReference type="EMBL" id="AL123456">
    <property type="protein sequence ID" value="CCP46258.1"/>
    <property type="molecule type" value="Genomic_DNA"/>
</dbReference>
<dbReference type="PIR" id="B70976">
    <property type="entry name" value="B70976"/>
</dbReference>
<dbReference type="RefSeq" id="NP_217953.1">
    <property type="nucleotide sequence ID" value="NC_000962.3"/>
</dbReference>
<dbReference type="RefSeq" id="WP_003418289.1">
    <property type="nucleotide sequence ID" value="NZ_NVQJ01000027.1"/>
</dbReference>
<dbReference type="SMR" id="P9WN49"/>
<dbReference type="FunCoup" id="P9WN49">
    <property type="interactions" value="300"/>
</dbReference>
<dbReference type="STRING" id="83332.Rv3436c"/>
<dbReference type="PaxDb" id="83332-Rv3436c"/>
<dbReference type="DNASU" id="887568"/>
<dbReference type="GeneID" id="887568"/>
<dbReference type="KEGG" id="mtu:Rv3436c"/>
<dbReference type="KEGG" id="mtv:RVBD_3436c"/>
<dbReference type="TubercuList" id="Rv3436c"/>
<dbReference type="eggNOG" id="COG0449">
    <property type="taxonomic scope" value="Bacteria"/>
</dbReference>
<dbReference type="InParanoid" id="P9WN49"/>
<dbReference type="OrthoDB" id="9761808at2"/>
<dbReference type="PhylomeDB" id="P9WN49"/>
<dbReference type="Proteomes" id="UP000001584">
    <property type="component" value="Chromosome"/>
</dbReference>
<dbReference type="GO" id="GO:0005829">
    <property type="term" value="C:cytosol"/>
    <property type="evidence" value="ECO:0000318"/>
    <property type="project" value="GO_Central"/>
</dbReference>
<dbReference type="GO" id="GO:0005886">
    <property type="term" value="C:plasma membrane"/>
    <property type="evidence" value="ECO:0007005"/>
    <property type="project" value="MTBBASE"/>
</dbReference>
<dbReference type="GO" id="GO:0097367">
    <property type="term" value="F:carbohydrate derivative binding"/>
    <property type="evidence" value="ECO:0007669"/>
    <property type="project" value="InterPro"/>
</dbReference>
<dbReference type="GO" id="GO:0004360">
    <property type="term" value="F:glutamine-fructose-6-phosphate transaminase (isomerizing) activity"/>
    <property type="evidence" value="ECO:0000318"/>
    <property type="project" value="GO_Central"/>
</dbReference>
<dbReference type="GO" id="GO:0005975">
    <property type="term" value="P:carbohydrate metabolic process"/>
    <property type="evidence" value="ECO:0007669"/>
    <property type="project" value="UniProtKB-UniRule"/>
</dbReference>
<dbReference type="GO" id="GO:0006002">
    <property type="term" value="P:fructose 6-phosphate metabolic process"/>
    <property type="evidence" value="ECO:0000318"/>
    <property type="project" value="GO_Central"/>
</dbReference>
<dbReference type="GO" id="GO:0006487">
    <property type="term" value="P:protein N-linked glycosylation"/>
    <property type="evidence" value="ECO:0000318"/>
    <property type="project" value="GO_Central"/>
</dbReference>
<dbReference type="GO" id="GO:0006047">
    <property type="term" value="P:UDP-N-acetylglucosamine metabolic process"/>
    <property type="evidence" value="ECO:0000318"/>
    <property type="project" value="GO_Central"/>
</dbReference>
<dbReference type="CDD" id="cd00714">
    <property type="entry name" value="GFAT"/>
    <property type="match status" value="1"/>
</dbReference>
<dbReference type="CDD" id="cd05008">
    <property type="entry name" value="SIS_GlmS_GlmD_1"/>
    <property type="match status" value="1"/>
</dbReference>
<dbReference type="CDD" id="cd05009">
    <property type="entry name" value="SIS_GlmS_GlmD_2"/>
    <property type="match status" value="1"/>
</dbReference>
<dbReference type="FunFam" id="3.40.50.10490:FF:000001">
    <property type="entry name" value="Glutamine--fructose-6-phosphate aminotransferase [isomerizing]"/>
    <property type="match status" value="1"/>
</dbReference>
<dbReference type="FunFam" id="3.40.50.10490:FF:000002">
    <property type="entry name" value="Glutamine--fructose-6-phosphate aminotransferase [isomerizing]"/>
    <property type="match status" value="1"/>
</dbReference>
<dbReference type="FunFam" id="3.60.20.10:FF:000006">
    <property type="entry name" value="Glutamine--fructose-6-phosphate aminotransferase [isomerizing]"/>
    <property type="match status" value="1"/>
</dbReference>
<dbReference type="Gene3D" id="3.40.50.10490">
    <property type="entry name" value="Glucose-6-phosphate isomerase like protein, domain 1"/>
    <property type="match status" value="2"/>
</dbReference>
<dbReference type="Gene3D" id="3.60.20.10">
    <property type="entry name" value="Glutamine Phosphoribosylpyrophosphate, subunit 1, domain 1"/>
    <property type="match status" value="1"/>
</dbReference>
<dbReference type="HAMAP" id="MF_00164">
    <property type="entry name" value="GlmS"/>
    <property type="match status" value="1"/>
</dbReference>
<dbReference type="InterPro" id="IPR017932">
    <property type="entry name" value="GATase_2_dom"/>
</dbReference>
<dbReference type="InterPro" id="IPR005855">
    <property type="entry name" value="GFAT"/>
</dbReference>
<dbReference type="InterPro" id="IPR047084">
    <property type="entry name" value="GFAT_N"/>
</dbReference>
<dbReference type="InterPro" id="IPR035466">
    <property type="entry name" value="GlmS/AgaS_SIS"/>
</dbReference>
<dbReference type="InterPro" id="IPR035490">
    <property type="entry name" value="GlmS/FrlB_SIS"/>
</dbReference>
<dbReference type="InterPro" id="IPR029055">
    <property type="entry name" value="Ntn_hydrolases_N"/>
</dbReference>
<dbReference type="InterPro" id="IPR001347">
    <property type="entry name" value="SIS_dom"/>
</dbReference>
<dbReference type="InterPro" id="IPR046348">
    <property type="entry name" value="SIS_dom_sf"/>
</dbReference>
<dbReference type="NCBIfam" id="TIGR01135">
    <property type="entry name" value="glmS"/>
    <property type="match status" value="1"/>
</dbReference>
<dbReference type="NCBIfam" id="NF001484">
    <property type="entry name" value="PRK00331.1"/>
    <property type="match status" value="1"/>
</dbReference>
<dbReference type="PANTHER" id="PTHR10937">
    <property type="entry name" value="GLUCOSAMINE--FRUCTOSE-6-PHOSPHATE AMINOTRANSFERASE, ISOMERIZING"/>
    <property type="match status" value="1"/>
</dbReference>
<dbReference type="PANTHER" id="PTHR10937:SF0">
    <property type="entry name" value="GLUTAMINE--FRUCTOSE-6-PHOSPHATE TRANSAMINASE (ISOMERIZING)"/>
    <property type="match status" value="1"/>
</dbReference>
<dbReference type="Pfam" id="PF13522">
    <property type="entry name" value="GATase_6"/>
    <property type="match status" value="1"/>
</dbReference>
<dbReference type="Pfam" id="PF01380">
    <property type="entry name" value="SIS"/>
    <property type="match status" value="2"/>
</dbReference>
<dbReference type="SUPFAM" id="SSF56235">
    <property type="entry name" value="N-terminal nucleophile aminohydrolases (Ntn hydrolases)"/>
    <property type="match status" value="1"/>
</dbReference>
<dbReference type="SUPFAM" id="SSF53697">
    <property type="entry name" value="SIS domain"/>
    <property type="match status" value="1"/>
</dbReference>
<dbReference type="PROSITE" id="PS51278">
    <property type="entry name" value="GATASE_TYPE_2"/>
    <property type="match status" value="1"/>
</dbReference>
<dbReference type="PROSITE" id="PS51464">
    <property type="entry name" value="SIS"/>
    <property type="match status" value="2"/>
</dbReference>
<organism>
    <name type="scientific">Mycobacterium tuberculosis (strain ATCC 25618 / H37Rv)</name>
    <dbReference type="NCBI Taxonomy" id="83332"/>
    <lineage>
        <taxon>Bacteria</taxon>
        <taxon>Bacillati</taxon>
        <taxon>Actinomycetota</taxon>
        <taxon>Actinomycetes</taxon>
        <taxon>Mycobacteriales</taxon>
        <taxon>Mycobacteriaceae</taxon>
        <taxon>Mycobacterium</taxon>
        <taxon>Mycobacterium tuberculosis complex</taxon>
    </lineage>
</organism>
<gene>
    <name evidence="1" type="primary">glmS</name>
    <name type="ordered locus">Rv3436c</name>
    <name type="ORF">MTCY77.08c</name>
</gene>
<evidence type="ECO:0000255" key="1">
    <source>
        <dbReference type="HAMAP-Rule" id="MF_00164"/>
    </source>
</evidence>
<evidence type="ECO:0000305" key="2"/>
<keyword id="KW-0032">Aminotransferase</keyword>
<keyword id="KW-0963">Cytoplasm</keyword>
<keyword id="KW-0315">Glutamine amidotransferase</keyword>
<keyword id="KW-1185">Reference proteome</keyword>
<keyword id="KW-0677">Repeat</keyword>
<keyword id="KW-0808">Transferase</keyword>
<comment type="function">
    <text evidence="1">Catalyzes the first step in hexosamine metabolism, converting fructose-6P into glucosamine-6P using glutamine as a nitrogen source.</text>
</comment>
<comment type="catalytic activity">
    <reaction evidence="1">
        <text>D-fructose 6-phosphate + L-glutamine = D-glucosamine 6-phosphate + L-glutamate</text>
        <dbReference type="Rhea" id="RHEA:13237"/>
        <dbReference type="ChEBI" id="CHEBI:29985"/>
        <dbReference type="ChEBI" id="CHEBI:58359"/>
        <dbReference type="ChEBI" id="CHEBI:58725"/>
        <dbReference type="ChEBI" id="CHEBI:61527"/>
        <dbReference type="EC" id="2.6.1.16"/>
    </reaction>
</comment>
<comment type="subunit">
    <text evidence="1">Homodimer.</text>
</comment>
<comment type="subcellular location">
    <subcellularLocation>
        <location evidence="1">Cytoplasm</location>
    </subcellularLocation>
</comment>
<comment type="sequence caution" evidence="2">
    <conflict type="erroneous initiation">
        <sequence resource="EMBL-CDS" id="CAA04007"/>
    </conflict>
</comment>
<feature type="initiator methionine" description="Removed" evidence="1">
    <location>
        <position position="1"/>
    </location>
</feature>
<feature type="chain" id="PRO_0000135357" description="Glutamine--fructose-6-phosphate aminotransferase [isomerizing]">
    <location>
        <begin position="2"/>
        <end position="624"/>
    </location>
</feature>
<feature type="domain" description="Glutamine amidotransferase type-2" evidence="1">
    <location>
        <begin position="2"/>
        <end position="225"/>
    </location>
</feature>
<feature type="domain" description="SIS 1" evidence="1">
    <location>
        <begin position="297"/>
        <end position="436"/>
    </location>
</feature>
<feature type="domain" description="SIS 2" evidence="1">
    <location>
        <begin position="469"/>
        <end position="614"/>
    </location>
</feature>
<feature type="active site" description="Nucleophile; for GATase activity" evidence="1">
    <location>
        <position position="2"/>
    </location>
</feature>
<feature type="active site" description="For Fru-6P isomerization activity" evidence="1">
    <location>
        <position position="619"/>
    </location>
</feature>